<reference key="1">
    <citation type="journal article" date="1994" name="J. Biol. Chem.">
        <title>Complete primary structure of the human alpha 3(IV) collagen chain. Coexpression of the alpha 3(IV) and alpha 4(IV) collagen chains in human tissues.</title>
        <authorList>
            <person name="Mariyama M."/>
            <person name="Leinonen A."/>
            <person name="Mochizuki T."/>
            <person name="Tryggvason K."/>
            <person name="Reeders S.T."/>
        </authorList>
    </citation>
    <scope>NUCLEOTIDE SEQUENCE [MRNA] (ISOFORM 1)</scope>
    <scope>TISSUE SPECIFICITY</scope>
    <scope>VARIANTS PRO-141; GLY-162 AND LEU-574</scope>
    <source>
        <tissue>Kidney</tissue>
    </source>
</reference>
<reference key="2">
    <citation type="submission" date="1998-10" db="EMBL/GenBank/DDBJ databases">
        <authorList>
            <person name="Leinonen A."/>
        </authorList>
    </citation>
    <scope>SEQUENCE REVISION</scope>
</reference>
<reference key="3">
    <citation type="journal article" date="2001" name="J. Am. Soc. Nephrol.">
        <title>Structure of the human type IV collagen gene COL4A3 and mutations in autosomal Alport syndrome.</title>
        <authorList>
            <person name="Heidet L."/>
            <person name="Arrondel C."/>
            <person name="Forestier L."/>
            <person name="Cohen-Solal L."/>
            <person name="Mollet G."/>
            <person name="Gutierrez B."/>
            <person name="Stavrou C."/>
            <person name="Gubler M.-C."/>
            <person name="Antignac C."/>
        </authorList>
    </citation>
    <scope>NUCLEOTIDE SEQUENCE [GENOMIC DNA] (ISOFORM 1)</scope>
    <scope>VARIANTS ATS3A GLU-297; ARG-407; ARG-640; ARG-1167; GLN-1215; SER-1277; THR-1330 AND CYS-1661</scope>
    <scope>VARIANTS ATS3B GLU-1207; GLU-1334 AND GLU-1347</scope>
    <scope>VARIANTS ARG-43; PRO-141; TYR-326; HIS-408; ARG-451; LEU-574; GLU-1269 AND PRO-1474</scope>
</reference>
<reference key="4">
    <citation type="journal article" date="2005" name="Nature">
        <title>Generation and annotation of the DNA sequences of human chromosomes 2 and 4.</title>
        <authorList>
            <person name="Hillier L.W."/>
            <person name="Graves T.A."/>
            <person name="Fulton R.S."/>
            <person name="Fulton L.A."/>
            <person name="Pepin K.H."/>
            <person name="Minx P."/>
            <person name="Wagner-McPherson C."/>
            <person name="Layman D."/>
            <person name="Wylie K."/>
            <person name="Sekhon M."/>
            <person name="Becker M.C."/>
            <person name="Fewell G.A."/>
            <person name="Delehaunty K.D."/>
            <person name="Miner T.L."/>
            <person name="Nash W.E."/>
            <person name="Kremitzki C."/>
            <person name="Oddy L."/>
            <person name="Du H."/>
            <person name="Sun H."/>
            <person name="Bradshaw-Cordum H."/>
            <person name="Ali J."/>
            <person name="Carter J."/>
            <person name="Cordes M."/>
            <person name="Harris A."/>
            <person name="Isak A."/>
            <person name="van Brunt A."/>
            <person name="Nguyen C."/>
            <person name="Du F."/>
            <person name="Courtney L."/>
            <person name="Kalicki J."/>
            <person name="Ozersky P."/>
            <person name="Abbott S."/>
            <person name="Armstrong J."/>
            <person name="Belter E.A."/>
            <person name="Caruso L."/>
            <person name="Cedroni M."/>
            <person name="Cotton M."/>
            <person name="Davidson T."/>
            <person name="Desai A."/>
            <person name="Elliott G."/>
            <person name="Erb T."/>
            <person name="Fronick C."/>
            <person name="Gaige T."/>
            <person name="Haakenson W."/>
            <person name="Haglund K."/>
            <person name="Holmes A."/>
            <person name="Harkins R."/>
            <person name="Kim K."/>
            <person name="Kruchowski S.S."/>
            <person name="Strong C.M."/>
            <person name="Grewal N."/>
            <person name="Goyea E."/>
            <person name="Hou S."/>
            <person name="Levy A."/>
            <person name="Martinka S."/>
            <person name="Mead K."/>
            <person name="McLellan M.D."/>
            <person name="Meyer R."/>
            <person name="Randall-Maher J."/>
            <person name="Tomlinson C."/>
            <person name="Dauphin-Kohlberg S."/>
            <person name="Kozlowicz-Reilly A."/>
            <person name="Shah N."/>
            <person name="Swearengen-Shahid S."/>
            <person name="Snider J."/>
            <person name="Strong J.T."/>
            <person name="Thompson J."/>
            <person name="Yoakum M."/>
            <person name="Leonard S."/>
            <person name="Pearman C."/>
            <person name="Trani L."/>
            <person name="Radionenko M."/>
            <person name="Waligorski J.E."/>
            <person name="Wang C."/>
            <person name="Rock S.M."/>
            <person name="Tin-Wollam A.-M."/>
            <person name="Maupin R."/>
            <person name="Latreille P."/>
            <person name="Wendl M.C."/>
            <person name="Yang S.-P."/>
            <person name="Pohl C."/>
            <person name="Wallis J.W."/>
            <person name="Spieth J."/>
            <person name="Bieri T.A."/>
            <person name="Berkowicz N."/>
            <person name="Nelson J.O."/>
            <person name="Osborne J."/>
            <person name="Ding L."/>
            <person name="Meyer R."/>
            <person name="Sabo A."/>
            <person name="Shotland Y."/>
            <person name="Sinha P."/>
            <person name="Wohldmann P.E."/>
            <person name="Cook L.L."/>
            <person name="Hickenbotham M.T."/>
            <person name="Eldred J."/>
            <person name="Williams D."/>
            <person name="Jones T.A."/>
            <person name="She X."/>
            <person name="Ciccarelli F.D."/>
            <person name="Izaurralde E."/>
            <person name="Taylor J."/>
            <person name="Schmutz J."/>
            <person name="Myers R.M."/>
            <person name="Cox D.R."/>
            <person name="Huang X."/>
            <person name="McPherson J.D."/>
            <person name="Mardis E.R."/>
            <person name="Clifton S.W."/>
            <person name="Warren W.C."/>
            <person name="Chinwalla A.T."/>
            <person name="Eddy S.R."/>
            <person name="Marra M.A."/>
            <person name="Ovcharenko I."/>
            <person name="Furey T.S."/>
            <person name="Miller W."/>
            <person name="Eichler E.E."/>
            <person name="Bork P."/>
            <person name="Suyama M."/>
            <person name="Torrents D."/>
            <person name="Waterston R.H."/>
            <person name="Wilson R.K."/>
        </authorList>
    </citation>
    <scope>NUCLEOTIDE SEQUENCE [LARGE SCALE GENOMIC DNA]</scope>
</reference>
<reference key="5">
    <citation type="journal article" date="1998" name="FEBS Lett.">
        <title>Two genes, COL4A3 and COL4A4 coding for the human alpha3(IV) and alpha4(IV) collagen chains are arranged head-to-head on chromosome 2q36.</title>
        <authorList>
            <person name="Momota R."/>
            <person name="Sugimoto M."/>
            <person name="Oohashi T."/>
            <person name="Kigasawa K."/>
            <person name="Yoshioka H."/>
            <person name="Ninomiya Y."/>
        </authorList>
    </citation>
    <scope>NUCLEOTIDE SEQUENCE [GENOMIC DNA] OF 1-29</scope>
</reference>
<reference key="6">
    <citation type="journal article" date="1992" name="J. Clin. Invest.">
        <title>Molecular cloning of the human Goodpasture antigen demonstrates it to be the alpha 3 chain of type IV collagen.</title>
        <authorList>
            <person name="Turner N."/>
            <person name="Mason P.J."/>
            <person name="Brown R."/>
            <person name="Fox M."/>
            <person name="Povey S."/>
            <person name="Rees A."/>
            <person name="Pusey C.D."/>
        </authorList>
    </citation>
    <scope>NUCLEOTIDE SEQUENCE [GENOMIC DNA / MRNA] OF 1331-1670 (ISOFORM 1)</scope>
    <source>
        <tissue>Kidney</tissue>
    </source>
</reference>
<reference key="7">
    <citation type="journal article" date="1992" name="J. Biol. Chem.">
        <title>Exon/intron structure of the human alpha 3(IV) gene encompassing the Goodpasture antigen (alpha 3(IV)NC1). Identification of a potentially antigenic region at the triple helix/NC1 domain junction.</title>
        <authorList>
            <person name="Quinones S."/>
            <person name="Bernal D."/>
            <person name="Garcia-Sogo M."/>
            <person name="Elena S.F."/>
            <person name="Saus J."/>
        </authorList>
    </citation>
    <scope>NUCLEOTIDE SEQUENCE [MRNA] OF 1386-1670 (ISOFORM 1)</scope>
    <scope>PARTIAL PROTEIN SEQUENCE</scope>
</reference>
<reference key="8">
    <citation type="journal article" date="1994" name="J. Biol. Chem.">
        <authorList>
            <person name="Quinones S."/>
            <person name="Bernal D."/>
            <person name="Garcia-Sogo M."/>
            <person name="Elena S.F."/>
            <person name="Saus J."/>
        </authorList>
    </citation>
    <scope>ERRATUM OF PUBMED:1400291</scope>
</reference>
<reference key="9">
    <citation type="journal article" date="1995" name="Eur. J. Biochem.">
        <title>Characterization and expression of multiple alternatively spliced transcripts of the Goodpasture antigen gene region. Goodpasture antibodies recognize recombinant proteins representing the autoantigen and one of its alternative forms.</title>
        <authorList>
            <person name="Penades J.R."/>
            <person name="Bernal D."/>
            <person name="Revert F."/>
            <person name="Johansson C."/>
            <person name="Fresquet V.J."/>
            <person name="Cervera J."/>
            <person name="Wieslander J."/>
            <person name="Quinones S."/>
            <person name="Saus J."/>
        </authorList>
    </citation>
    <scope>NUCLEOTIDE SEQUENCE [MRNA] OF 1386-1670 (ISOFORMS 1; 2; 3; 4 AND 5)</scope>
    <scope>ALTERNATIVE SPLICING</scope>
    <source>
        <tissue>Kidney</tissue>
    </source>
</reference>
<reference key="10">
    <citation type="journal article" date="2000" name="J. Biol. Chem.">
        <title>Distinct antitumor properties of a type IV collagen domain derived from basement membrane.</title>
        <authorList>
            <person name="Maeshima Y."/>
            <person name="Colorado P.C."/>
            <person name="Torre A."/>
            <person name="Holthaus K.A."/>
            <person name="Grunkemeyer J.A."/>
            <person name="Ericksen M.B."/>
            <person name="Hopfer H."/>
            <person name="Xiao Y."/>
            <person name="Stillman I.E."/>
            <person name="Kalluri R."/>
        </authorList>
    </citation>
    <scope>NUCLEOTIDE SEQUENCE [MRNA] OF 1426-1670 (ISOFORM 1)</scope>
    <scope>FUNCTION</scope>
</reference>
<reference key="11">
    <citation type="journal article" date="1994" name="J. Biol. Chem.">
        <title>Alternative splicing of the NC1 domain of the human alpha 3(IV) collagen gene. Differential expression of mRNA transcripts that predict three protein variants with distinct carboxyl regions.</title>
        <authorList>
            <person name="Feng L."/>
            <person name="Xia Y."/>
            <person name="Wilson C.B."/>
        </authorList>
    </citation>
    <scope>NUCLEOTIDE SEQUENCE [MRNA] OF 1439-1670 (ISOFORMS 2 AND 3)</scope>
    <scope>ALTERNATIVE SPLICING (ISOFORM 1)</scope>
    <source>
        <tissue>Kidney</tissue>
    </source>
</reference>
<reference key="12">
    <citation type="journal article" date="1991" name="Am. J. Hum. Genet.">
        <title>Sequence and localization of a partial cDNA encoding the human alpha 3 chain of type IV collagen.</title>
        <authorList>
            <person name="Morrison K.E."/>
            <person name="Mariyama M."/>
            <person name="Yang-Feng T.L."/>
            <person name="Reeders S.T."/>
        </authorList>
    </citation>
    <scope>NUCLEOTIDE SEQUENCE [MRNA] OF 1453-1670 (ISOFORM 1)</scope>
</reference>
<reference key="13">
    <citation type="submission" date="1993-01" db="EMBL/GenBank/DDBJ databases">
        <authorList>
            <person name="Ding J."/>
        </authorList>
    </citation>
    <scope>NUCLEOTIDE SEQUENCE [GENOMIC DNA] OF 1644-1670 (ISOFORM 1)</scope>
    <source>
        <tissue>Kidney</tissue>
    </source>
</reference>
<reference key="14">
    <citation type="journal article" date="1993" name="J. Biol. Chem.">
        <title>The human mRNA encoding the Goodpasture antigen is alternatively spliced.</title>
        <authorList>
            <person name="Bernal D."/>
            <person name="Quinones S."/>
            <person name="Saus J."/>
        </authorList>
    </citation>
    <scope>PARTIAL NUCLEOTIDE SEQUENCE [MRNA] (ISOFORMS 1 AND 3)</scope>
    <scope>ALTERNATIVE SPLICING</scope>
    <scope>TISSUE SPECIFICITY</scope>
    <source>
        <tissue>Kidney</tissue>
    </source>
</reference>
<reference key="15">
    <citation type="journal article" date="1994" name="J. Biol. Chem.">
        <title>Complete primary structure of the human type IV collagen alpha 4(IV) chain. Comparison with structure and expression of the other alpha (IV) chains.</title>
        <authorList>
            <person name="Leinonen A."/>
            <person name="Mariyama M."/>
            <person name="Mochizuki T."/>
            <person name="Tryggvason K."/>
            <person name="Reeders S.T."/>
        </authorList>
    </citation>
    <scope>TISSUE SPECIFICITY</scope>
</reference>
<reference key="16">
    <citation type="journal article" date="1994" name="Nat. Genet.">
        <title>Identification of mutations in the alpha 3(IV) and alpha 4(IV) collagen genes in autosomal recessive Alport syndrome.</title>
        <authorList>
            <person name="Mochizuki T."/>
            <person name="Lemmink H.H."/>
            <person name="Mariyama M."/>
            <person name="Antignac C."/>
            <person name="Gubler M.-C."/>
            <person name="Pirson Y."/>
            <person name="Verellen-Dumoulin C."/>
            <person name="Chan B."/>
            <person name="Schroeder C.H."/>
            <person name="Smeets H.J.M."/>
            <person name="Reeders S.T."/>
        </authorList>
    </citation>
    <scope>INVOLVEMENT IN ATS3B</scope>
    <scope>VARIANT ATS3B 1481-ARG--HIS-1670 DEL</scope>
</reference>
<reference key="17">
    <citation type="journal article" date="1997" name="Hum. Mutat.">
        <title>The clinical spectrum of type IV collagen mutations.</title>
        <authorList>
            <person name="Lemmink H.H."/>
            <person name="Schroeder C.H."/>
            <person name="Monnens L.A.H."/>
            <person name="Smeets H.J.M."/>
        </authorList>
    </citation>
    <scope>VARIANTS ATS3B 1481-ARG--HIS-1670 DEL AND 1524-SER--HIS-1670 DEL</scope>
</reference>
<reference key="18">
    <citation type="journal article" date="1999" name="J. Biol. Chem.">
        <title>Characterization of a novel type of serine/threonine kinase that specifically phosphorylates the human goodpasture antigen.</title>
        <authorList>
            <person name="Raya A."/>
            <person name="Revert F."/>
            <person name="Navarro S."/>
            <person name="Saus J."/>
        </authorList>
    </citation>
    <scope>PHOSPHORYLATION</scope>
</reference>
<reference key="19">
    <citation type="journal article" date="2000" name="J. Biol. Chem.">
        <title>Two RGD-independent alpha vbeta 3 integrin binding sites on tumstatin regulate distinct anti-tumor properties.</title>
        <authorList>
            <person name="Maeshima Y."/>
            <person name="Colorado P.C."/>
            <person name="Kalluri R."/>
        </authorList>
    </citation>
    <scope>FUNCTION</scope>
</reference>
<reference key="20">
    <citation type="journal article" date="2000" name="Kidney Int.">
        <title>Autosomal dominant Alport syndrome caused by a COL4A3 splice site mutation.</title>
        <authorList>
            <person name="van der Loop F.T.L."/>
            <person name="Heidet L."/>
            <person name="Timmer E.D.J."/>
            <person name="van den Bosch B.J.C."/>
            <person name="Leinonen A."/>
            <person name="Antignac C."/>
            <person name="Jefferson J.A."/>
            <person name="Maxwell A.P."/>
            <person name="Monnens L.A.H."/>
            <person name="Schroder C.H."/>
            <person name="Smeets H.J.M."/>
        </authorList>
    </citation>
    <scope>INVOLVEMENT IN ATS3A</scope>
</reference>
<reference key="21">
    <citation type="journal article" date="2002" name="J. Biol. Chem.">
        <title>Quaternary organization of the goodpasture autoantigen, the alpha 3(IV) collagen chain. Sequestration of two cryptic autoepitopes by intrapromoter interactions with the alpha4 and alpha5 NC1 domains.</title>
        <authorList>
            <person name="Borza D.B."/>
            <person name="Bondar O."/>
            <person name="Todd P."/>
            <person name="Sundaramoorthy M."/>
            <person name="Sado Y."/>
            <person name="Ninomiya Y."/>
            <person name="Hudson B.G."/>
        </authorList>
    </citation>
    <scope>HEXAMERIZATION</scope>
</reference>
<reference key="22">
    <citation type="journal article" date="2003" name="Proc. Natl. Acad. Sci. U.S.A.">
        <title>Human tumstatin and human endostatin exhibit distinct antiangiogenic activities mediated by alpha v beta 3 and alpha 5 beta 1 integrins.</title>
        <authorList>
            <person name="Sudhakar A."/>
            <person name="Sugimoto H."/>
            <person name="Yang C."/>
            <person name="Lively J."/>
            <person name="Zeisberg M."/>
            <person name="Kalluri R."/>
        </authorList>
    </citation>
    <scope>FUNCTION</scope>
    <scope>INTERACTION WITH ITGB3</scope>
</reference>
<reference key="23">
    <citation type="journal article" date="2004" name="Hum. Pathol.">
        <title>Implication of tumstatin in tumor progression of human bronchopulmonary carcinomas.</title>
        <authorList>
            <person name="Caudroy S."/>
            <person name="Cucherousset J."/>
            <person name="Lorenzato M."/>
            <person name="Zahm J.-M."/>
            <person name="Martinella-Catusse C."/>
            <person name="Polette M."/>
            <person name="Birembaut P."/>
        </authorList>
    </citation>
    <scope>FUNCTION</scope>
</reference>
<reference key="24">
    <citation type="journal article" date="1994" name="Hum. Mol. Genet.">
        <title>Mutations in the type IV collagen alpha 3 (COL4A3) gene in autosomal recessive Alport syndrome.</title>
        <authorList>
            <person name="Lemmink H.H."/>
            <person name="Mochizuki T."/>
            <person name="van den Heuvel L.P.W.J."/>
            <person name="Schroeder C.H."/>
            <person name="Barrientos A."/>
            <person name="Monnens L.A.H."/>
            <person name="van Oost B.A."/>
            <person name="Brunner H.G."/>
            <person name="Reeders S.T."/>
            <person name="Smeets H.J.M."/>
        </authorList>
    </citation>
    <scope>VARIANT PRO-1474</scope>
</reference>
<reference key="25">
    <citation type="journal article" date="2002" name="J. Am. Soc. Nephrol.">
        <title>Mutations in the COL4A4 and COL4A3 genes cause familial benign hematuria.</title>
        <authorList>
            <person name="Badenas C."/>
            <person name="Praga M."/>
            <person name="Tazon B."/>
            <person name="Heidet L."/>
            <person name="Arrondel C."/>
            <person name="Armengol A."/>
            <person name="Andres A."/>
            <person name="Morales E."/>
            <person name="Camacho J.A."/>
            <person name="Lens X."/>
            <person name="Davila S."/>
            <person name="Mila M."/>
            <person name="Antignac C."/>
            <person name="Darnell A."/>
            <person name="Torra R."/>
        </authorList>
    </citation>
    <scope>VARIANTS BFH2 VAL-985 AND GLU-1015</scope>
</reference>
<reference key="26">
    <citation type="journal article" date="2005" name="Hum. Mutat.">
        <title>Novel COL4A5, COL4A4, and COL4A3 mutations in Alport syndrome.</title>
        <authorList>
            <person name="Nagel M."/>
            <person name="Nagorka S."/>
            <person name="Gross O."/>
        </authorList>
    </citation>
    <scope>VARIANTS ATS3B ASP-532; ARG-739; ARG-853 AND ARG-1216</scope>
</reference>
<reference key="27">
    <citation type="journal article" date="2014" name="Clin. Genet.">
        <title>A founder mutation in COL4A3 causes autosomal recessive Alport syndrome in the Ashkenazi Jewish population.</title>
        <authorList>
            <person name="Webb B.D."/>
            <person name="Brandt T."/>
            <person name="Liu L."/>
            <person name="Jalas C."/>
            <person name="Liao J."/>
            <person name="Fedick A."/>
            <person name="Linderman M.D."/>
            <person name="Diaz G.A."/>
            <person name="Kornreich R."/>
            <person name="Trachtman H."/>
            <person name="Mehta L."/>
            <person name="Edelmann L."/>
        </authorList>
    </citation>
    <scope>INVOLVEMENT IN ATS3B</scope>
</reference>
<reference key="28">
    <citation type="journal article" date="2018" name="Front. Pediatr.">
        <title>Heterozygous COL4A3 variants in histologically diagnosed focal segmental glomerulosclerosis.</title>
        <authorList>
            <person name="Braunisch M.C."/>
            <person name="Buettner-Herold M."/>
            <person name="Guenthner R."/>
            <person name="Satanovskij R."/>
            <person name="Riedhammer K.M."/>
            <person name="Herr P.M."/>
            <person name="Klein H.G."/>
            <person name="Wahl D."/>
            <person name="Kuechle C."/>
            <person name="Renders L."/>
            <person name="Heemann U."/>
            <person name="Schmaderer C."/>
            <person name="Hoefele J."/>
        </authorList>
    </citation>
    <scope>VARIANTS ATS3B VAL-631 AND CYS-1661</scope>
</reference>
<feature type="signal peptide" evidence="2">
    <location>
        <begin position="1"/>
        <end position="28"/>
    </location>
</feature>
<feature type="chain" id="PRO_0000005844" description="Collagen alpha-3(IV) chain">
    <location>
        <begin position="29"/>
        <end position="1670"/>
    </location>
</feature>
<feature type="chain" id="PRO_0000279684" description="Tumstatin">
    <location>
        <begin position="1426"/>
        <end position="1670"/>
    </location>
</feature>
<feature type="domain" description="Collagen IV NC1" evidence="3">
    <location>
        <begin position="1445"/>
        <end position="1669"/>
    </location>
</feature>
<feature type="region of interest" description="7S domain">
    <location>
        <begin position="29"/>
        <end position="42"/>
    </location>
</feature>
<feature type="region of interest" description="Triple-helical region">
    <location>
        <begin position="43"/>
        <end position="1438"/>
    </location>
</feature>
<feature type="region of interest" description="Disordered" evidence="4">
    <location>
        <begin position="49"/>
        <end position="78"/>
    </location>
</feature>
<feature type="region of interest" description="Disordered" evidence="4">
    <location>
        <begin position="167"/>
        <end position="469"/>
    </location>
</feature>
<feature type="region of interest" description="Disordered" evidence="4">
    <location>
        <begin position="502"/>
        <end position="1442"/>
    </location>
</feature>
<feature type="region of interest" description="Epitope recognized by Goodpasture antibodies">
    <location>
        <begin position="1427"/>
        <end position="1444"/>
    </location>
</feature>
<feature type="region of interest" description="Required for the anti-angiogenic activity of tumstatin">
    <location>
        <begin position="1479"/>
        <end position="1557"/>
    </location>
</feature>
<feature type="region of interest" description="Required for the anti-tumor cell activity of tumstatin">
    <location>
        <begin position="1610"/>
        <end position="1628"/>
    </location>
</feature>
<feature type="short sequence motif" description="Cell attachment site" evidence="2">
    <location>
        <begin position="791"/>
        <end position="793"/>
    </location>
</feature>
<feature type="short sequence motif" description="Cell attachment site" evidence="2">
    <location>
        <begin position="996"/>
        <end position="998"/>
    </location>
</feature>
<feature type="short sequence motif" description="Cell attachment site" evidence="2">
    <location>
        <begin position="1154"/>
        <end position="1156"/>
    </location>
</feature>
<feature type="short sequence motif" description="Cell attachment site" evidence="2">
    <location>
        <begin position="1306"/>
        <end position="1308"/>
    </location>
</feature>
<feature type="short sequence motif" description="Cell attachment site" evidence="2">
    <location>
        <begin position="1345"/>
        <end position="1347"/>
    </location>
</feature>
<feature type="short sequence motif" description="Cell attachment site" evidence="2">
    <location>
        <begin position="1432"/>
        <end position="1434"/>
    </location>
</feature>
<feature type="compositionally biased region" description="Pro residues" evidence="4">
    <location>
        <begin position="176"/>
        <end position="200"/>
    </location>
</feature>
<feature type="compositionally biased region" description="Low complexity" evidence="4">
    <location>
        <begin position="202"/>
        <end position="212"/>
    </location>
</feature>
<feature type="compositionally biased region" description="Basic and acidic residues" evidence="4">
    <location>
        <begin position="217"/>
        <end position="231"/>
    </location>
</feature>
<feature type="compositionally biased region" description="Low complexity" evidence="4">
    <location>
        <begin position="242"/>
        <end position="251"/>
    </location>
</feature>
<feature type="compositionally biased region" description="Basic and acidic residues" evidence="4">
    <location>
        <begin position="253"/>
        <end position="266"/>
    </location>
</feature>
<feature type="compositionally biased region" description="Low complexity" evidence="4">
    <location>
        <begin position="382"/>
        <end position="394"/>
    </location>
</feature>
<feature type="compositionally biased region" description="Basic and acidic residues" evidence="4">
    <location>
        <begin position="402"/>
        <end position="411"/>
    </location>
</feature>
<feature type="compositionally biased region" description="Low complexity" evidence="4">
    <location>
        <begin position="415"/>
        <end position="428"/>
    </location>
</feature>
<feature type="compositionally biased region" description="Pro residues" evidence="4">
    <location>
        <begin position="429"/>
        <end position="438"/>
    </location>
</feature>
<feature type="compositionally biased region" description="Pro residues" evidence="4">
    <location>
        <begin position="598"/>
        <end position="618"/>
    </location>
</feature>
<feature type="compositionally biased region" description="Pro residues" evidence="4">
    <location>
        <begin position="654"/>
        <end position="675"/>
    </location>
</feature>
<feature type="compositionally biased region" description="Pro residues" evidence="4">
    <location>
        <begin position="900"/>
        <end position="909"/>
    </location>
</feature>
<feature type="compositionally biased region" description="Low complexity" evidence="4">
    <location>
        <begin position="974"/>
        <end position="987"/>
    </location>
</feature>
<feature type="compositionally biased region" description="Low complexity" evidence="4">
    <location>
        <begin position="1013"/>
        <end position="1025"/>
    </location>
</feature>
<feature type="compositionally biased region" description="Low complexity" evidence="4">
    <location>
        <begin position="1094"/>
        <end position="1105"/>
    </location>
</feature>
<feature type="compositionally biased region" description="Low complexity" evidence="4">
    <location>
        <begin position="1118"/>
        <end position="1133"/>
    </location>
</feature>
<feature type="compositionally biased region" description="Pro residues" evidence="4">
    <location>
        <begin position="1135"/>
        <end position="1148"/>
    </location>
</feature>
<feature type="compositionally biased region" description="Low complexity" evidence="4">
    <location>
        <begin position="1230"/>
        <end position="1250"/>
    </location>
</feature>
<feature type="compositionally biased region" description="Low complexity" evidence="4">
    <location>
        <begin position="1290"/>
        <end position="1299"/>
    </location>
</feature>
<feature type="compositionally biased region" description="Pro residues" evidence="4">
    <location>
        <begin position="1332"/>
        <end position="1341"/>
    </location>
</feature>
<feature type="site" description="Cleavage; by collagenase" evidence="1">
    <location>
        <begin position="1426"/>
        <end position="1427"/>
    </location>
</feature>
<feature type="glycosylation site" description="N-linked (GlcNAc...) asparagine" evidence="2">
    <location>
        <position position="253"/>
    </location>
</feature>
<feature type="disulfide bond" description="Or C-1460 with C-1548" evidence="3">
    <location>
        <begin position="1460"/>
        <end position="1551"/>
    </location>
</feature>
<feature type="disulfide bond" description="Or C-1493 with C-1551" evidence="3">
    <location>
        <begin position="1493"/>
        <end position="1548"/>
    </location>
</feature>
<feature type="disulfide bond" evidence="3">
    <location>
        <begin position="1505"/>
        <end position="1511"/>
    </location>
</feature>
<feature type="disulfide bond" description="Or C-1570 with C-1662" evidence="3">
    <location>
        <begin position="1570"/>
        <end position="1665"/>
    </location>
</feature>
<feature type="disulfide bond" description="Or C-1604 with C-1665" evidence="3">
    <location>
        <begin position="1604"/>
        <end position="1662"/>
    </location>
</feature>
<feature type="disulfide bond" evidence="3">
    <location>
        <begin position="1616"/>
        <end position="1622"/>
    </location>
</feature>
<feature type="cross-link" description="S-Lysyl-methionine sulfilimine (Met-Lys) (interchain with K-1651)" evidence="1">
    <location>
        <position position="1533"/>
    </location>
</feature>
<feature type="cross-link" description="S-Lysyl-methionine sulfilimine (Lys-Met) (interchain with M-1533)" evidence="1">
    <location>
        <position position="1651"/>
    </location>
</feature>
<feature type="splice variant" id="VSP_023498" description="In isoform 5." evidence="19">
    <original>GPAGSDG</original>
    <variation>ESLFHQL</variation>
    <location>
        <begin position="1418"/>
        <end position="1424"/>
    </location>
</feature>
<feature type="splice variant" id="VSP_023499" description="In isoform 5." evidence="19">
    <location>
        <begin position="1425"/>
        <end position="1670"/>
    </location>
</feature>
<feature type="splice variant" id="VSP_001171" description="In isoform 3." evidence="19 20">
    <original>GTLGSCLQRFTTMPFLFCNVNDVCNFASRNDYSYWLSTPALMPMNMAPITGRALEPYISRCTVCEGPAIAIAVHSQTTDIPPCPHGWISLWKGFSFIMFTSAGSEGTGQALASPGSCLEEFRASPFLECHGRGTCNYYSNSYSFWLASLNPERMFRKPIPSTVKAGELEKIISRCQVCMKKRH</original>
    <variation>DALFVKVLRSP</variation>
    <location>
        <begin position="1488"/>
        <end position="1670"/>
    </location>
</feature>
<feature type="splice variant" id="VSP_023500" description="In isoform 4." evidence="19">
    <original>GTLGSCLQRFTTMPFLFCNVNDVCNFASRNDYSYWLSTPALMPMNMAPITGRALEPYISRCTVCEGPAIAIAVHSQTTDIPPCPHGWISLWKGFSFIMFTSAGSEGTGQALASPGSCLEEFRASPFLECHGRGTCNYYSNSYSFWLASLNPERMFRKPIPSTVKAGELEKIISRCQVCMKKRH</original>
    <variation>ESLFHQL</variation>
    <location>
        <begin position="1488"/>
        <end position="1670"/>
    </location>
</feature>
<feature type="splice variant" id="VSP_001170" description="In isoform 2." evidence="19 20">
    <original>FTSAGSEGTGQALASPGSCLEEFRASPFLECHGRGTCNYYSNSYSFWLASLNPERMFRKPIPSTVKAGELEKIISRCQVCMKKRH</original>
    <variation>KAYSINCESWGIRKNNKSLSGVHEEKTLKLKKTAELVFFILKNKVMTEHAVI</variation>
    <location>
        <begin position="1586"/>
        <end position="1670"/>
    </location>
</feature>
<feature type="sequence variant" id="VAR_011202" description="In dbSNP:rs13424243." evidence="6">
    <original>G</original>
    <variation>R</variation>
    <location>
        <position position="43"/>
    </location>
</feature>
<feature type="sequence variant" id="VAR_030944" description="In dbSNP:rs10178458." evidence="6 16">
    <original>L</original>
    <variation>P</variation>
    <location>
        <position position="141"/>
    </location>
</feature>
<feature type="sequence variant" id="VAR_011203" description="In dbSNP:rs6436669." evidence="16">
    <original>E</original>
    <variation>G</variation>
    <location>
        <position position="162"/>
    </location>
</feature>
<feature type="sequence variant" id="VAR_011204" description="In ATS3A; dbSNP:rs1422638161." evidence="6">
    <original>G</original>
    <variation>E</variation>
    <location>
        <position position="297"/>
    </location>
</feature>
<feature type="sequence variant" id="VAR_011205" description="In dbSNP:rs55703767." evidence="6">
    <original>D</original>
    <variation>Y</variation>
    <location>
        <position position="326"/>
    </location>
</feature>
<feature type="sequence variant" id="VAR_011206" description="In ATS3A; dbSNP:rs1559878862." evidence="6">
    <original>G</original>
    <variation>R</variation>
    <location>
        <position position="407"/>
    </location>
</feature>
<feature type="sequence variant" id="VAR_011207" description="In dbSNP:rs34505188." evidence="6">
    <original>R</original>
    <variation>H</variation>
    <location>
        <position position="408"/>
    </location>
</feature>
<feature type="sequence variant" id="VAR_011208" description="In dbSNP:rs11677877." evidence="6">
    <original>H</original>
    <variation>R</variation>
    <location>
        <position position="451"/>
    </location>
</feature>
<feature type="sequence variant" id="VAR_030945" description="In ATS3B; dbSNP:rs371405814." evidence="10">
    <original>G</original>
    <variation>D</variation>
    <location>
        <position position="532"/>
    </location>
</feature>
<feature type="sequence variant" id="VAR_011209" description="In dbSNP:rs28381984." evidence="6 16">
    <original>P</original>
    <variation>L</variation>
    <location>
        <position position="574"/>
    </location>
</feature>
<feature type="sequence variant" id="VAR_080826" description="In ATS3B; likely pathogenic; dbSNP:rs1315862965." evidence="12">
    <original>G</original>
    <variation>V</variation>
    <location>
        <position position="631"/>
    </location>
</feature>
<feature type="sequence variant" id="VAR_011210" description="In ATS3A; dbSNP:rs200672668." evidence="6">
    <original>G</original>
    <variation>R</variation>
    <location>
        <position position="640"/>
    </location>
</feature>
<feature type="sequence variant" id="VAR_030946" description="In ATS3B; dbSNP:rs375040636." evidence="10">
    <original>G</original>
    <variation>R</variation>
    <location>
        <position position="739"/>
    </location>
</feature>
<feature type="sequence variant" id="VAR_061118" description="In dbSNP:rs56226424.">
    <original>K</original>
    <variation>R</variation>
    <location>
        <position position="834"/>
    </location>
</feature>
<feature type="sequence variant" id="VAR_030947" description="In ATS3B; dbSNP:rs763726708." evidence="10">
    <original>G</original>
    <variation>R</variation>
    <location>
        <position position="853"/>
    </location>
</feature>
<feature type="sequence variant" id="VAR_030948" description="In BFH2; dbSNP:rs121912827." evidence="7">
    <original>G</original>
    <variation>V</variation>
    <location>
        <position position="985"/>
    </location>
</feature>
<feature type="sequence variant" id="VAR_030949" description="In BFH2; dbSNP:rs121912826." evidence="7">
    <original>G</original>
    <variation>E</variation>
    <location>
        <position position="1015"/>
    </location>
</feature>
<feature type="sequence variant" id="VAR_011211" description="In ATS3A; dbSNP:rs267606745." evidence="6">
    <original>G</original>
    <variation>R</variation>
    <location>
        <position position="1167"/>
    </location>
</feature>
<feature type="sequence variant" id="VAR_011212" description="In ATS3B; in isolated microhematuria at heterozygosity; dbSNP:rs1553764136." evidence="6">
    <original>G</original>
    <variation>E</variation>
    <location>
        <position position="1207"/>
    </location>
</feature>
<feature type="sequence variant" id="VAR_011213" description="In ATS3A; uncertain significance; dbSNP:rs200443942." evidence="6">
    <original>R</original>
    <variation>Q</variation>
    <location>
        <position position="1215"/>
    </location>
</feature>
<feature type="sequence variant" id="VAR_030950" description="In ATS3B." evidence="10">
    <original>G</original>
    <variation>R</variation>
    <location>
        <position position="1216"/>
    </location>
</feature>
<feature type="sequence variant" id="VAR_011214" description="In dbSNP:rs57611801." evidence="6">
    <original>D</original>
    <variation>E</variation>
    <location>
        <position position="1269"/>
    </location>
</feature>
<feature type="sequence variant" id="VAR_011215" description="In ATS3A; dbSNP:rs190598500." evidence="6">
    <original>G</original>
    <variation>S</variation>
    <location>
        <position position="1277"/>
    </location>
</feature>
<feature type="sequence variant" id="VAR_011216" description="In ATS3A; uncertain significance; dbSNP:rs767033956." evidence="6">
    <original>I</original>
    <variation>T</variation>
    <location>
        <position position="1330"/>
    </location>
</feature>
<feature type="sequence variant" id="VAR_011217" description="In ATS3B; dbSNP:rs375290088." evidence="6">
    <original>G</original>
    <variation>E</variation>
    <location>
        <position position="1334"/>
    </location>
</feature>
<feature type="sequence variant" id="VAR_011218" description="In ATS3B; uncertain significance; dbSNP:rs73996414." evidence="6">
    <original>D</original>
    <variation>E</variation>
    <location>
        <position position="1347"/>
    </location>
</feature>
<feature type="sequence variant" id="VAR_001908" description="In dbSNP:rs200302125." evidence="6 14">
    <original>L</original>
    <variation>P</variation>
    <location>
        <position position="1474"/>
    </location>
</feature>
<feature type="sequence variant" id="VAR_089099" description="In ATS3B." evidence="15 18">
    <location>
        <begin position="1481"/>
        <end position="1670"/>
    </location>
</feature>
<feature type="sequence variant" id="VAR_001909" description="In dbSNP:rs77964815.">
    <original>Q</original>
    <variation>R</variation>
    <location>
        <position position="1495"/>
    </location>
</feature>
<feature type="sequence variant" id="VAR_089100" description="In ATS3B." evidence="18">
    <location>
        <begin position="1524"/>
        <end position="1670"/>
    </location>
</feature>
<feature type="sequence variant" id="VAR_011219" description="In ATS3A and ATS3B; likely pathogenic; dbSNP:rs201697532." evidence="6 12">
    <original>R</original>
    <variation>C</variation>
    <location>
        <position position="1661"/>
    </location>
</feature>
<feature type="sequence conflict" description="In Ref. 3; CAC36101." evidence="21" ref="3">
    <original>T</original>
    <variation>R</variation>
    <location>
        <position position="911"/>
    </location>
</feature>
<feature type="sequence conflict" description="In Ref. 11; AAA18942." evidence="21" ref="11">
    <original>R</original>
    <variation>I</variation>
    <location>
        <position position="1539"/>
    </location>
</feature>
<feature type="sequence conflict" description="In Ref. 12; AAB19637." evidence="21" ref="12">
    <original>T</original>
    <variation>A</variation>
    <location>
        <position position="1594"/>
    </location>
</feature>
<feature type="sequence conflict" description="In Ref. 13; AAA52044." evidence="21" ref="13">
    <original>QV</original>
    <variation>HL</variation>
    <location>
        <begin position="1663"/>
        <end position="1664"/>
    </location>
</feature>
<feature type="strand" evidence="23">
    <location>
        <begin position="1445"/>
        <end position="1451"/>
    </location>
</feature>
<feature type="strand" evidence="23">
    <location>
        <begin position="1453"/>
        <end position="1456"/>
    </location>
</feature>
<feature type="strand" evidence="23">
    <location>
        <begin position="1465"/>
        <end position="1478"/>
    </location>
</feature>
<feature type="strand" evidence="23">
    <location>
        <begin position="1481"/>
        <end position="1484"/>
    </location>
</feature>
<feature type="helix" evidence="23">
    <location>
        <begin position="1490"/>
        <end position="1492"/>
    </location>
</feature>
<feature type="strand" evidence="23">
    <location>
        <begin position="1493"/>
        <end position="1496"/>
    </location>
</feature>
<feature type="strand" evidence="23">
    <location>
        <begin position="1502"/>
        <end position="1505"/>
    </location>
</feature>
<feature type="strand" evidence="23">
    <location>
        <begin position="1511"/>
        <end position="1514"/>
    </location>
</feature>
<feature type="strand" evidence="23">
    <location>
        <begin position="1519"/>
        <end position="1524"/>
    </location>
</feature>
<feature type="helix" evidence="23">
    <location>
        <begin position="1538"/>
        <end position="1544"/>
    </location>
</feature>
<feature type="strand" evidence="23">
    <location>
        <begin position="1547"/>
        <end position="1555"/>
    </location>
</feature>
<feature type="strand" evidence="23">
    <location>
        <begin position="1557"/>
        <end position="1561"/>
    </location>
</feature>
<feature type="strand" evidence="23">
    <location>
        <begin position="1563"/>
        <end position="1566"/>
    </location>
</feature>
<feature type="strand" evidence="23">
    <location>
        <begin position="1575"/>
        <end position="1587"/>
    </location>
</feature>
<feature type="helix" evidence="23">
    <location>
        <begin position="1589"/>
        <end position="1591"/>
    </location>
</feature>
<feature type="strand" evidence="23">
    <location>
        <begin position="1593"/>
        <end position="1595"/>
    </location>
</feature>
<feature type="helix" evidence="23">
    <location>
        <begin position="1601"/>
        <end position="1603"/>
    </location>
</feature>
<feature type="strand" evidence="23">
    <location>
        <begin position="1604"/>
        <end position="1607"/>
    </location>
</feature>
<feature type="strand" evidence="23">
    <location>
        <begin position="1613"/>
        <end position="1617"/>
    </location>
</feature>
<feature type="strand" evidence="23">
    <location>
        <begin position="1629"/>
        <end position="1634"/>
    </location>
</feature>
<feature type="helix" evidence="23">
    <location>
        <begin position="1638"/>
        <end position="1640"/>
    </location>
</feature>
<feature type="strand" evidence="22">
    <location>
        <begin position="1641"/>
        <end position="1643"/>
    </location>
</feature>
<feature type="strand" evidence="23">
    <location>
        <begin position="1648"/>
        <end position="1651"/>
    </location>
</feature>
<feature type="helix" evidence="23">
    <location>
        <begin position="1655"/>
        <end position="1658"/>
    </location>
</feature>
<feature type="strand" evidence="23">
    <location>
        <begin position="1661"/>
        <end position="1666"/>
    </location>
</feature>
<feature type="sequence conflict" description="In Ref. 11; AAA18942." evidence="21" ref="11">
    <original>R</original>
    <variation>I</variation>
    <location sequence="Q01955-2">
        <position position="1539"/>
    </location>
</feature>
<organism>
    <name type="scientific">Homo sapiens</name>
    <name type="common">Human</name>
    <dbReference type="NCBI Taxonomy" id="9606"/>
    <lineage>
        <taxon>Eukaryota</taxon>
        <taxon>Metazoa</taxon>
        <taxon>Chordata</taxon>
        <taxon>Craniata</taxon>
        <taxon>Vertebrata</taxon>
        <taxon>Euteleostomi</taxon>
        <taxon>Mammalia</taxon>
        <taxon>Eutheria</taxon>
        <taxon>Euarchontoglires</taxon>
        <taxon>Primates</taxon>
        <taxon>Haplorrhini</taxon>
        <taxon>Catarrhini</taxon>
        <taxon>Hominidae</taxon>
        <taxon>Homo</taxon>
    </lineage>
</organism>
<accession>Q01955</accession>
<accession>Q53QQ1</accession>
<accession>Q53R14</accession>
<accession>Q53RW8</accession>
<accession>Q9BQT2</accession>
<accession>Q9NYC4</accession>
<accession>Q9UDJ9</accession>
<accession>Q9UDK9</accession>
<accession>Q9UDL0</accession>
<accession>Q9UDL1</accession>
<dbReference type="EMBL" id="X80031">
    <property type="protein sequence ID" value="CAA56335.1"/>
    <property type="molecule type" value="mRNA"/>
</dbReference>
<dbReference type="EMBL" id="AJ288487">
    <property type="protein sequence ID" value="CAC36101.1"/>
    <property type="molecule type" value="Genomic_DNA"/>
</dbReference>
<dbReference type="EMBL" id="AJ288488">
    <property type="protein sequence ID" value="CAC36101.1"/>
    <property type="status" value="JOINED"/>
    <property type="molecule type" value="Genomic_DNA"/>
</dbReference>
<dbReference type="EMBL" id="AJ288489">
    <property type="protein sequence ID" value="CAC36101.1"/>
    <property type="status" value="JOINED"/>
    <property type="molecule type" value="Genomic_DNA"/>
</dbReference>
<dbReference type="EMBL" id="AJ288490">
    <property type="protein sequence ID" value="CAC36101.1"/>
    <property type="status" value="JOINED"/>
    <property type="molecule type" value="Genomic_DNA"/>
</dbReference>
<dbReference type="EMBL" id="AJ288491">
    <property type="protein sequence ID" value="CAC36101.1"/>
    <property type="status" value="JOINED"/>
    <property type="molecule type" value="Genomic_DNA"/>
</dbReference>
<dbReference type="EMBL" id="AJ288492">
    <property type="protein sequence ID" value="CAC36101.1"/>
    <property type="status" value="JOINED"/>
    <property type="molecule type" value="Genomic_DNA"/>
</dbReference>
<dbReference type="EMBL" id="AJ288493">
    <property type="protein sequence ID" value="CAC36101.1"/>
    <property type="status" value="JOINED"/>
    <property type="molecule type" value="Genomic_DNA"/>
</dbReference>
<dbReference type="EMBL" id="AJ288494">
    <property type="protein sequence ID" value="CAC36101.1"/>
    <property type="status" value="JOINED"/>
    <property type="molecule type" value="Genomic_DNA"/>
</dbReference>
<dbReference type="EMBL" id="AJ288495">
    <property type="protein sequence ID" value="CAC36101.1"/>
    <property type="status" value="JOINED"/>
    <property type="molecule type" value="Genomic_DNA"/>
</dbReference>
<dbReference type="EMBL" id="AJ288496">
    <property type="protein sequence ID" value="CAC36101.1"/>
    <property type="status" value="JOINED"/>
    <property type="molecule type" value="Genomic_DNA"/>
</dbReference>
<dbReference type="EMBL" id="AJ288497">
    <property type="protein sequence ID" value="CAC36101.1"/>
    <property type="status" value="JOINED"/>
    <property type="molecule type" value="Genomic_DNA"/>
</dbReference>
<dbReference type="EMBL" id="AJ288498">
    <property type="protein sequence ID" value="CAC36101.1"/>
    <property type="status" value="JOINED"/>
    <property type="molecule type" value="Genomic_DNA"/>
</dbReference>
<dbReference type="EMBL" id="AJ288499">
    <property type="protein sequence ID" value="CAC36101.1"/>
    <property type="status" value="JOINED"/>
    <property type="molecule type" value="Genomic_DNA"/>
</dbReference>
<dbReference type="EMBL" id="AJ288500">
    <property type="protein sequence ID" value="CAC36101.1"/>
    <property type="status" value="JOINED"/>
    <property type="molecule type" value="Genomic_DNA"/>
</dbReference>
<dbReference type="EMBL" id="AJ288501">
    <property type="protein sequence ID" value="CAC36101.1"/>
    <property type="status" value="JOINED"/>
    <property type="molecule type" value="Genomic_DNA"/>
</dbReference>
<dbReference type="EMBL" id="AJ288502">
    <property type="protein sequence ID" value="CAC36101.1"/>
    <property type="status" value="JOINED"/>
    <property type="molecule type" value="Genomic_DNA"/>
</dbReference>
<dbReference type="EMBL" id="AJ288503">
    <property type="protein sequence ID" value="CAC36101.1"/>
    <property type="status" value="JOINED"/>
    <property type="molecule type" value="Genomic_DNA"/>
</dbReference>
<dbReference type="EMBL" id="AJ288504">
    <property type="protein sequence ID" value="CAC36101.1"/>
    <property type="status" value="JOINED"/>
    <property type="molecule type" value="Genomic_DNA"/>
</dbReference>
<dbReference type="EMBL" id="AJ288505">
    <property type="protein sequence ID" value="CAC36101.1"/>
    <property type="status" value="JOINED"/>
    <property type="molecule type" value="Genomic_DNA"/>
</dbReference>
<dbReference type="EMBL" id="AJ288506">
    <property type="protein sequence ID" value="CAC36101.1"/>
    <property type="status" value="JOINED"/>
    <property type="molecule type" value="Genomic_DNA"/>
</dbReference>
<dbReference type="EMBL" id="AJ288507">
    <property type="protein sequence ID" value="CAC36101.1"/>
    <property type="status" value="JOINED"/>
    <property type="molecule type" value="Genomic_DNA"/>
</dbReference>
<dbReference type="EMBL" id="AJ288508">
    <property type="protein sequence ID" value="CAC36101.1"/>
    <property type="status" value="JOINED"/>
    <property type="molecule type" value="Genomic_DNA"/>
</dbReference>
<dbReference type="EMBL" id="AJ288509">
    <property type="protein sequence ID" value="CAC36101.1"/>
    <property type="status" value="JOINED"/>
    <property type="molecule type" value="Genomic_DNA"/>
</dbReference>
<dbReference type="EMBL" id="AJ288510">
    <property type="protein sequence ID" value="CAC36101.1"/>
    <property type="status" value="JOINED"/>
    <property type="molecule type" value="Genomic_DNA"/>
</dbReference>
<dbReference type="EMBL" id="AJ288511">
    <property type="protein sequence ID" value="CAC36101.1"/>
    <property type="status" value="JOINED"/>
    <property type="molecule type" value="Genomic_DNA"/>
</dbReference>
<dbReference type="EMBL" id="AJ288512">
    <property type="protein sequence ID" value="CAC36101.1"/>
    <property type="status" value="JOINED"/>
    <property type="molecule type" value="Genomic_DNA"/>
</dbReference>
<dbReference type="EMBL" id="AJ288513">
    <property type="protein sequence ID" value="CAC36101.1"/>
    <property type="status" value="JOINED"/>
    <property type="molecule type" value="Genomic_DNA"/>
</dbReference>
<dbReference type="EMBL" id="AJ288514">
    <property type="protein sequence ID" value="CAC36101.1"/>
    <property type="status" value="JOINED"/>
    <property type="molecule type" value="Genomic_DNA"/>
</dbReference>
<dbReference type="EMBL" id="AJ288515">
    <property type="protein sequence ID" value="CAC36101.1"/>
    <property type="status" value="JOINED"/>
    <property type="molecule type" value="Genomic_DNA"/>
</dbReference>
<dbReference type="EMBL" id="AJ288516">
    <property type="protein sequence ID" value="CAC36101.1"/>
    <property type="status" value="JOINED"/>
    <property type="molecule type" value="Genomic_DNA"/>
</dbReference>
<dbReference type="EMBL" id="AJ288517">
    <property type="protein sequence ID" value="CAC36101.1"/>
    <property type="status" value="JOINED"/>
    <property type="molecule type" value="Genomic_DNA"/>
</dbReference>
<dbReference type="EMBL" id="AJ288518">
    <property type="protein sequence ID" value="CAC36101.1"/>
    <property type="status" value="JOINED"/>
    <property type="molecule type" value="Genomic_DNA"/>
</dbReference>
<dbReference type="EMBL" id="AJ288519">
    <property type="protein sequence ID" value="CAC36101.1"/>
    <property type="status" value="JOINED"/>
    <property type="molecule type" value="Genomic_DNA"/>
</dbReference>
<dbReference type="EMBL" id="AJ288520">
    <property type="protein sequence ID" value="CAC36101.1"/>
    <property type="status" value="JOINED"/>
    <property type="molecule type" value="Genomic_DNA"/>
</dbReference>
<dbReference type="EMBL" id="AJ288521">
    <property type="protein sequence ID" value="CAC36101.1"/>
    <property type="status" value="JOINED"/>
    <property type="molecule type" value="Genomic_DNA"/>
</dbReference>
<dbReference type="EMBL" id="AJ288522">
    <property type="protein sequence ID" value="CAC36101.1"/>
    <property type="status" value="JOINED"/>
    <property type="molecule type" value="Genomic_DNA"/>
</dbReference>
<dbReference type="EMBL" id="AJ288523">
    <property type="protein sequence ID" value="CAC36101.1"/>
    <property type="status" value="JOINED"/>
    <property type="molecule type" value="Genomic_DNA"/>
</dbReference>
<dbReference type="EMBL" id="AJ288524">
    <property type="protein sequence ID" value="CAC36101.1"/>
    <property type="status" value="JOINED"/>
    <property type="molecule type" value="Genomic_DNA"/>
</dbReference>
<dbReference type="EMBL" id="AJ288525">
    <property type="protein sequence ID" value="CAC36101.1"/>
    <property type="status" value="JOINED"/>
    <property type="molecule type" value="Genomic_DNA"/>
</dbReference>
<dbReference type="EMBL" id="AJ288526">
    <property type="protein sequence ID" value="CAC36101.1"/>
    <property type="status" value="JOINED"/>
    <property type="molecule type" value="Genomic_DNA"/>
</dbReference>
<dbReference type="EMBL" id="AJ288527">
    <property type="protein sequence ID" value="CAC36101.1"/>
    <property type="status" value="JOINED"/>
    <property type="molecule type" value="Genomic_DNA"/>
</dbReference>
<dbReference type="EMBL" id="AJ288528">
    <property type="protein sequence ID" value="CAC36101.1"/>
    <property type="status" value="JOINED"/>
    <property type="molecule type" value="Genomic_DNA"/>
</dbReference>
<dbReference type="EMBL" id="AJ288529">
    <property type="protein sequence ID" value="CAC36101.1"/>
    <property type="status" value="JOINED"/>
    <property type="molecule type" value="Genomic_DNA"/>
</dbReference>
<dbReference type="EMBL" id="AJ288530">
    <property type="protein sequence ID" value="CAC36101.1"/>
    <property type="status" value="JOINED"/>
    <property type="molecule type" value="Genomic_DNA"/>
</dbReference>
<dbReference type="EMBL" id="AJ288531">
    <property type="protein sequence ID" value="CAC36101.1"/>
    <property type="status" value="JOINED"/>
    <property type="molecule type" value="Genomic_DNA"/>
</dbReference>
<dbReference type="EMBL" id="AJ288532">
    <property type="protein sequence ID" value="CAC36101.1"/>
    <property type="status" value="JOINED"/>
    <property type="molecule type" value="Genomic_DNA"/>
</dbReference>
<dbReference type="EMBL" id="AJ288533">
    <property type="protein sequence ID" value="CAC36101.1"/>
    <property type="status" value="JOINED"/>
    <property type="molecule type" value="Genomic_DNA"/>
</dbReference>
<dbReference type="EMBL" id="AJ288534">
    <property type="protein sequence ID" value="CAC36101.1"/>
    <property type="status" value="JOINED"/>
    <property type="molecule type" value="Genomic_DNA"/>
</dbReference>
<dbReference type="EMBL" id="AJ288535">
    <property type="protein sequence ID" value="CAC36101.1"/>
    <property type="status" value="JOINED"/>
    <property type="molecule type" value="Genomic_DNA"/>
</dbReference>
<dbReference type="EMBL" id="AJ288536">
    <property type="protein sequence ID" value="CAC36101.1"/>
    <property type="status" value="JOINED"/>
    <property type="molecule type" value="Genomic_DNA"/>
</dbReference>
<dbReference type="EMBL" id="AJ288537">
    <property type="protein sequence ID" value="CAC36101.1"/>
    <property type="status" value="JOINED"/>
    <property type="molecule type" value="Genomic_DNA"/>
</dbReference>
<dbReference type="EMBL" id="AJ288538">
    <property type="protein sequence ID" value="CAC36101.1"/>
    <property type="status" value="JOINED"/>
    <property type="molecule type" value="Genomic_DNA"/>
</dbReference>
<dbReference type="EMBL" id="AC079235">
    <property type="protein sequence ID" value="AAY14671.1"/>
    <property type="molecule type" value="Genomic_DNA"/>
</dbReference>
<dbReference type="EMBL" id="AC097662">
    <property type="protein sequence ID" value="AAY24251.1"/>
    <property type="molecule type" value="Genomic_DNA"/>
</dbReference>
<dbReference type="EMBL" id="AC107069">
    <property type="protein sequence ID" value="AAX93111.1"/>
    <property type="molecule type" value="Genomic_DNA"/>
</dbReference>
<dbReference type="EMBL" id="AB008496">
    <property type="protein sequence ID" value="BAA25064.1"/>
    <property type="molecule type" value="Genomic_DNA"/>
</dbReference>
<dbReference type="EMBL" id="M81379">
    <property type="protein sequence ID" value="AAA51556.1"/>
    <property type="molecule type" value="mRNA"/>
</dbReference>
<dbReference type="EMBL" id="M92993">
    <property type="protein sequence ID" value="AAA21610.1"/>
    <property type="molecule type" value="mRNA"/>
</dbReference>
<dbReference type="EMBL" id="AF258351">
    <property type="protein sequence ID" value="AAF72632.1"/>
    <property type="molecule type" value="mRNA"/>
</dbReference>
<dbReference type="EMBL" id="U02519">
    <property type="protein sequence ID" value="AAA18942.1"/>
    <property type="molecule type" value="mRNA"/>
</dbReference>
<dbReference type="EMBL" id="U02520">
    <property type="protein sequence ID" value="AAA18943.1"/>
    <property type="molecule type" value="mRNA"/>
</dbReference>
<dbReference type="EMBL" id="S55790">
    <property type="protein sequence ID" value="AAB19637.1"/>
    <property type="molecule type" value="mRNA"/>
</dbReference>
<dbReference type="EMBL" id="L08650">
    <property type="protein sequence ID" value="AAA52044.1"/>
    <property type="molecule type" value="Genomic_DNA"/>
</dbReference>
<dbReference type="CCDS" id="CCDS42829.1">
    <molecule id="Q01955-1"/>
</dbReference>
<dbReference type="PIR" id="A49736">
    <property type="entry name" value="A49736"/>
</dbReference>
<dbReference type="PIR" id="A54763">
    <property type="entry name" value="CGHU3B"/>
</dbReference>
<dbReference type="PIR" id="B49736">
    <property type="entry name" value="B49736"/>
</dbReference>
<dbReference type="PIR" id="S69113">
    <property type="entry name" value="S69113"/>
</dbReference>
<dbReference type="RefSeq" id="NP_000082.2">
    <molecule id="Q01955-1"/>
    <property type="nucleotide sequence ID" value="NM_000091.5"/>
</dbReference>
<dbReference type="RefSeq" id="XP_047299180.1">
    <molecule id="Q01955-3"/>
    <property type="nucleotide sequence ID" value="XM_047443224.1"/>
</dbReference>
<dbReference type="PDB" id="5NB0">
    <property type="method" value="X-ray"/>
    <property type="resolution" value="2.70 A"/>
    <property type="chains" value="A/B/C/D/E/F/G/H=1441-1670"/>
</dbReference>
<dbReference type="PDB" id="6WKU">
    <property type="method" value="X-ray"/>
    <property type="resolution" value="1.76 A"/>
    <property type="chains" value="A=1439-1666"/>
</dbReference>
<dbReference type="PDBsum" id="5NB0"/>
<dbReference type="PDBsum" id="6WKU"/>
<dbReference type="SMR" id="Q01955"/>
<dbReference type="BioGRID" id="107682">
    <property type="interactions" value="9"/>
</dbReference>
<dbReference type="ComplexPortal" id="CPX-1725">
    <property type="entry name" value="Collagen type IV trimer variant 3"/>
</dbReference>
<dbReference type="CORUM" id="Q01955"/>
<dbReference type="FunCoup" id="Q01955">
    <property type="interactions" value="608"/>
</dbReference>
<dbReference type="IntAct" id="Q01955">
    <property type="interactions" value="2"/>
</dbReference>
<dbReference type="STRING" id="9606.ENSP00000379823"/>
<dbReference type="ChEMBL" id="CHEMBL2364188"/>
<dbReference type="GlyCosmos" id="Q01955">
    <property type="glycosylation" value="1 site, No reported glycans"/>
</dbReference>
<dbReference type="GlyGen" id="Q01955">
    <property type="glycosylation" value="11 sites, 1 O-linked glycan (1 site)"/>
</dbReference>
<dbReference type="iPTMnet" id="Q01955"/>
<dbReference type="PhosphoSitePlus" id="Q01955"/>
<dbReference type="BioMuta" id="COL4A3"/>
<dbReference type="DMDM" id="134035067"/>
<dbReference type="jPOST" id="Q01955"/>
<dbReference type="MassIVE" id="Q01955"/>
<dbReference type="PaxDb" id="9606-ENSP00000379823"/>
<dbReference type="PeptideAtlas" id="Q01955"/>
<dbReference type="ProteomicsDB" id="58016">
    <molecule id="Q01955-1"/>
</dbReference>
<dbReference type="ProteomicsDB" id="58017">
    <molecule id="Q01955-2"/>
</dbReference>
<dbReference type="ProteomicsDB" id="58018">
    <molecule id="Q01955-3"/>
</dbReference>
<dbReference type="ProteomicsDB" id="58019">
    <molecule id="Q01955-4"/>
</dbReference>
<dbReference type="ProteomicsDB" id="58020">
    <molecule id="Q01955-5"/>
</dbReference>
<dbReference type="ABCD" id="Q01955">
    <property type="antibodies" value="1 sequenced antibody"/>
</dbReference>
<dbReference type="Antibodypedia" id="34379">
    <property type="antibodies" value="285 antibodies from 31 providers"/>
</dbReference>
<dbReference type="DNASU" id="1285"/>
<dbReference type="Ensembl" id="ENST00000396578.8">
    <molecule id="Q01955-1"/>
    <property type="protein sequence ID" value="ENSP00000379823.3"/>
    <property type="gene ID" value="ENSG00000169031.21"/>
</dbReference>
<dbReference type="GeneID" id="1285"/>
<dbReference type="KEGG" id="hsa:1285"/>
<dbReference type="MANE-Select" id="ENST00000396578.8">
    <property type="protein sequence ID" value="ENSP00000379823.3"/>
    <property type="RefSeq nucleotide sequence ID" value="NM_000091.5"/>
    <property type="RefSeq protein sequence ID" value="NP_000082.2"/>
</dbReference>
<dbReference type="UCSC" id="uc002vom.2">
    <molecule id="Q01955-1"/>
    <property type="organism name" value="human"/>
</dbReference>
<dbReference type="AGR" id="HGNC:2204"/>
<dbReference type="CTD" id="1285"/>
<dbReference type="DisGeNET" id="1285"/>
<dbReference type="GeneCards" id="COL4A3"/>
<dbReference type="GeneReviews" id="COL4A3"/>
<dbReference type="HGNC" id="HGNC:2204">
    <property type="gene designation" value="COL4A3"/>
</dbReference>
<dbReference type="HPA" id="ENSG00000169031">
    <property type="expression patterns" value="Tissue enhanced (kidney, retina)"/>
</dbReference>
<dbReference type="MalaCards" id="COL4A3"/>
<dbReference type="MIM" id="104200">
    <property type="type" value="phenotype"/>
</dbReference>
<dbReference type="MIM" id="120070">
    <property type="type" value="gene"/>
</dbReference>
<dbReference type="MIM" id="620320">
    <property type="type" value="phenotype"/>
</dbReference>
<dbReference type="MIM" id="620536">
    <property type="type" value="phenotype"/>
</dbReference>
<dbReference type="neXtProt" id="NX_Q01955"/>
<dbReference type="OpenTargets" id="ENSG00000169031"/>
<dbReference type="Orphanet" id="88918">
    <property type="disease" value="Autosomal dominant Alport syndrome"/>
</dbReference>
<dbReference type="Orphanet" id="88919">
    <property type="disease" value="Autosomal recessive Alport syndrome"/>
</dbReference>
<dbReference type="Orphanet" id="653722">
    <property type="disease" value="Digenic Alport syndrome"/>
</dbReference>
<dbReference type="Orphanet" id="656">
    <property type="disease" value="Hereditary steroid-resistant nephrotic syndrome"/>
</dbReference>
<dbReference type="PharmGKB" id="PA26719"/>
<dbReference type="VEuPathDB" id="HostDB:ENSG00000169031"/>
<dbReference type="eggNOG" id="KOG3544">
    <property type="taxonomic scope" value="Eukaryota"/>
</dbReference>
<dbReference type="GeneTree" id="ENSGT00940000161675"/>
<dbReference type="HOGENOM" id="CLU_002023_0_0_1"/>
<dbReference type="InParanoid" id="Q01955"/>
<dbReference type="OMA" id="KGPPGRC"/>
<dbReference type="OrthoDB" id="10071882at2759"/>
<dbReference type="PAN-GO" id="Q01955">
    <property type="GO annotations" value="4 GO annotations based on evolutionary models"/>
</dbReference>
<dbReference type="PhylomeDB" id="Q01955"/>
<dbReference type="TreeFam" id="TF344135"/>
<dbReference type="PathwayCommons" id="Q01955"/>
<dbReference type="Reactome" id="R-HSA-1442490">
    <property type="pathway name" value="Collagen degradation"/>
</dbReference>
<dbReference type="Reactome" id="R-HSA-1474244">
    <property type="pathway name" value="Extracellular matrix organization"/>
</dbReference>
<dbReference type="Reactome" id="R-HSA-1650814">
    <property type="pathway name" value="Collagen biosynthesis and modifying enzymes"/>
</dbReference>
<dbReference type="Reactome" id="R-HSA-186797">
    <property type="pathway name" value="Signaling by PDGF"/>
</dbReference>
<dbReference type="Reactome" id="R-HSA-2022090">
    <property type="pathway name" value="Assembly of collagen fibrils and other multimeric structures"/>
</dbReference>
<dbReference type="Reactome" id="R-HSA-216083">
    <property type="pathway name" value="Integrin cell surface interactions"/>
</dbReference>
<dbReference type="Reactome" id="R-HSA-2214320">
    <property type="pathway name" value="Anchoring fibril formation"/>
</dbReference>
<dbReference type="Reactome" id="R-HSA-2243919">
    <property type="pathway name" value="Crosslinking of collagen fibrils"/>
</dbReference>
<dbReference type="Reactome" id="R-HSA-3000157">
    <property type="pathway name" value="Laminin interactions"/>
</dbReference>
<dbReference type="Reactome" id="R-HSA-3000171">
    <property type="pathway name" value="Non-integrin membrane-ECM interactions"/>
</dbReference>
<dbReference type="Reactome" id="R-HSA-3000178">
    <property type="pathway name" value="ECM proteoglycans"/>
</dbReference>
<dbReference type="Reactome" id="R-HSA-419037">
    <property type="pathway name" value="NCAM1 interactions"/>
</dbReference>
<dbReference type="Reactome" id="R-HSA-8948216">
    <property type="pathway name" value="Collagen chain trimerization"/>
</dbReference>
<dbReference type="SignaLink" id="Q01955"/>
<dbReference type="SIGNOR" id="Q01955"/>
<dbReference type="BioGRID-ORCS" id="1285">
    <property type="hits" value="10 hits in 1145 CRISPR screens"/>
</dbReference>
<dbReference type="ChiTaRS" id="COL4A3">
    <property type="organism name" value="human"/>
</dbReference>
<dbReference type="GeneWiki" id="Collagen_alpha-3(IV)_chain"/>
<dbReference type="GenomeRNAi" id="1285"/>
<dbReference type="Pharos" id="Q01955">
    <property type="development level" value="Tbio"/>
</dbReference>
<dbReference type="PRO" id="PR:Q01955"/>
<dbReference type="Proteomes" id="UP000005640">
    <property type="component" value="Chromosome 2"/>
</dbReference>
<dbReference type="RNAct" id="Q01955">
    <property type="molecule type" value="protein"/>
</dbReference>
<dbReference type="Bgee" id="ENSG00000169031">
    <property type="expression patterns" value="Expressed in skeletal muscle tissue of biceps brachii and 151 other cell types or tissues"/>
</dbReference>
<dbReference type="ExpressionAtlas" id="Q01955">
    <property type="expression patterns" value="baseline and differential"/>
</dbReference>
<dbReference type="GO" id="GO:0005604">
    <property type="term" value="C:basement membrane"/>
    <property type="evidence" value="ECO:0000314"/>
    <property type="project" value="UniProtKB"/>
</dbReference>
<dbReference type="GO" id="GO:0005587">
    <property type="term" value="C:collagen type IV trimer"/>
    <property type="evidence" value="ECO:0000314"/>
    <property type="project" value="UniProtKB"/>
</dbReference>
<dbReference type="GO" id="GO:0062023">
    <property type="term" value="C:collagen-containing extracellular matrix"/>
    <property type="evidence" value="ECO:0007005"/>
    <property type="project" value="BHF-UCL"/>
</dbReference>
<dbReference type="GO" id="GO:0005783">
    <property type="term" value="C:endoplasmic reticulum"/>
    <property type="evidence" value="ECO:0000314"/>
    <property type="project" value="HPA"/>
</dbReference>
<dbReference type="GO" id="GO:0005788">
    <property type="term" value="C:endoplasmic reticulum lumen"/>
    <property type="evidence" value="ECO:0000304"/>
    <property type="project" value="Reactome"/>
</dbReference>
<dbReference type="GO" id="GO:0005576">
    <property type="term" value="C:extracellular region"/>
    <property type="evidence" value="ECO:0000304"/>
    <property type="project" value="Reactome"/>
</dbReference>
<dbReference type="GO" id="GO:0005615">
    <property type="term" value="C:extracellular space"/>
    <property type="evidence" value="ECO:0000318"/>
    <property type="project" value="GO_Central"/>
</dbReference>
<dbReference type="GO" id="GO:0043231">
    <property type="term" value="C:intracellular membrane-bounded organelle"/>
    <property type="evidence" value="ECO:0000314"/>
    <property type="project" value="HPA"/>
</dbReference>
<dbReference type="GO" id="GO:0030020">
    <property type="term" value="F:extracellular matrix structural constituent conferring tensile strength"/>
    <property type="evidence" value="ECO:0007005"/>
    <property type="project" value="BHF-UCL"/>
</dbReference>
<dbReference type="GO" id="GO:0005178">
    <property type="term" value="F:integrin binding"/>
    <property type="evidence" value="ECO:0000314"/>
    <property type="project" value="UniProtKB"/>
</dbReference>
<dbReference type="GO" id="GO:0008191">
    <property type="term" value="F:metalloendopeptidase inhibitor activity"/>
    <property type="evidence" value="ECO:0000303"/>
    <property type="project" value="UniProtKB"/>
</dbReference>
<dbReference type="GO" id="GO:0005198">
    <property type="term" value="F:structural molecule activity"/>
    <property type="evidence" value="ECO:0000303"/>
    <property type="project" value="ProtInc"/>
</dbReference>
<dbReference type="GO" id="GO:0007155">
    <property type="term" value="P:cell adhesion"/>
    <property type="evidence" value="ECO:0007669"/>
    <property type="project" value="UniProtKB-KW"/>
</dbReference>
<dbReference type="GO" id="GO:0007166">
    <property type="term" value="P:cell surface receptor signaling pathway"/>
    <property type="evidence" value="ECO:0000303"/>
    <property type="project" value="UniProtKB"/>
</dbReference>
<dbReference type="GO" id="GO:0038063">
    <property type="term" value="P:collagen-activated tyrosine kinase receptor signaling pathway"/>
    <property type="evidence" value="ECO:0007669"/>
    <property type="project" value="Ensembl"/>
</dbReference>
<dbReference type="GO" id="GO:0072577">
    <property type="term" value="P:endothelial cell apoptotic process"/>
    <property type="evidence" value="ECO:0000314"/>
    <property type="project" value="UniProtKB"/>
</dbReference>
<dbReference type="GO" id="GO:0032836">
    <property type="term" value="P:glomerular basement membrane development"/>
    <property type="evidence" value="ECO:0000250"/>
    <property type="project" value="UniProtKB"/>
</dbReference>
<dbReference type="GO" id="GO:0016525">
    <property type="term" value="P:negative regulation of angiogenesis"/>
    <property type="evidence" value="ECO:0000314"/>
    <property type="project" value="UniProtKB"/>
</dbReference>
<dbReference type="GO" id="GO:0008285">
    <property type="term" value="P:negative regulation of cell population proliferation"/>
    <property type="evidence" value="ECO:0000304"/>
    <property type="project" value="ProtInc"/>
</dbReference>
<dbReference type="GO" id="GO:1905563">
    <property type="term" value="P:negative regulation of vascular endothelial cell proliferation"/>
    <property type="evidence" value="ECO:0000314"/>
    <property type="project" value="UniProtKB"/>
</dbReference>
<dbReference type="GO" id="GO:0007605">
    <property type="term" value="P:sensory perception of sound"/>
    <property type="evidence" value="ECO:0000304"/>
    <property type="project" value="ProtInc"/>
</dbReference>
<dbReference type="FunFam" id="2.170.240.10:FF:000001">
    <property type="entry name" value="Collagen IV alpha 1 chain"/>
    <property type="match status" value="1"/>
</dbReference>
<dbReference type="Gene3D" id="2.170.240.10">
    <property type="entry name" value="Collagen IV, non-collagenous"/>
    <property type="match status" value="1"/>
</dbReference>
<dbReference type="InterPro" id="IPR008160">
    <property type="entry name" value="Collagen"/>
</dbReference>
<dbReference type="InterPro" id="IPR001442">
    <property type="entry name" value="Collagen_IV_NC"/>
</dbReference>
<dbReference type="InterPro" id="IPR036954">
    <property type="entry name" value="Collagen_IV_NC_sf"/>
</dbReference>
<dbReference type="InterPro" id="IPR050938">
    <property type="entry name" value="Collagen_Structural_Proteins"/>
</dbReference>
<dbReference type="InterPro" id="IPR016187">
    <property type="entry name" value="CTDL_fold"/>
</dbReference>
<dbReference type="PANTHER" id="PTHR37456:SF4">
    <property type="entry name" value="COLLAGEN ALPHA-1(XXIII) CHAIN"/>
    <property type="match status" value="1"/>
</dbReference>
<dbReference type="PANTHER" id="PTHR37456">
    <property type="entry name" value="SI:CH211-266K2.1"/>
    <property type="match status" value="1"/>
</dbReference>
<dbReference type="Pfam" id="PF01413">
    <property type="entry name" value="C4"/>
    <property type="match status" value="2"/>
</dbReference>
<dbReference type="Pfam" id="PF01391">
    <property type="entry name" value="Collagen"/>
    <property type="match status" value="23"/>
</dbReference>
<dbReference type="SMART" id="SM00111">
    <property type="entry name" value="C4"/>
    <property type="match status" value="2"/>
</dbReference>
<dbReference type="SUPFAM" id="SSF56436">
    <property type="entry name" value="C-type lectin-like"/>
    <property type="match status" value="2"/>
</dbReference>
<dbReference type="PROSITE" id="PS51403">
    <property type="entry name" value="NC1_IV"/>
    <property type="match status" value="1"/>
</dbReference>
<protein>
    <recommendedName>
        <fullName>Collagen alpha-3(IV) chain</fullName>
    </recommendedName>
    <alternativeName>
        <fullName>Goodpasture antigen</fullName>
    </alternativeName>
    <component>
        <recommendedName>
            <fullName>Tumstatin</fullName>
        </recommendedName>
    </component>
</protein>
<sequence length="1670" mass="161813">MSARTAPRPQVLLLPLLLVLLAAAPAASKGCVCKDKGQCFCDGAKGEKGEKGFPGPPGSPGQKGFTGPEGLPGPQGPKGFPGLPGLTGSKGVRGISGLPGFSGSPGLPGTPGNTGPYGLVGVPGCSGSKGEQGFPGLPGTLGYPGIPGAAGLKGQKGAPAKEEDIELDAKGDPGLPGAPGPQGLPGPPGFPGPVGPPGPPGFFGFPGAMGPRGPKGHMGERVIGHKGERGVKGLTGPPGPPGTVIVTLTGPDNRTDLKGEKGDKGAMGEPGPPGPSGLPGESYGSEKGAPGDPGLQGKPGKDGVPGFPGSEGVKGNRGFPGLMGEDGIKGQKGDIGPPGFRGPTEYYDTYQEKGDEGTPGPPGPRGARGPQGPSGPPGVPGSPGSSRPGLRGAPGWPGLKGSKGERGRPGKDAMGTPGSPGCAGSPGLPGSPGPPGPPGDIVFRKGPPGDHGLPGYLGSPGIPGVDGPKGEPGLLCTQCPYIPGPPGLPGLPGLHGVKGIPGRQGAAGLKGSPGSPGNTGLPGFPGFPGAQGDPGLKGEKGETLQPEGQVGVPGDPGLRGQPGRKGLDGIPGTPGVKGLPGPKGELALSGEKGDQGPPGDPGSPGSPGPAGPAGPPGYGPQGEPGLQGTQGVPGAPGPPGEAGPRGELSVSTPVPGPPGPPGPPGHPGPQGPPGIPGSLGKCGDPGLPGPDGEPGIPGIGFPGPPGPKGDQGFPGTKGSLGCPGKMGEPGLPGKPGLPGAKGEPAVAMPGGPGTPGFPGERGNSGEHGEIGLPGLPGLPGTPGNEGLDGPRGDPGQPGPPGEQGPPGRCIEGPRGAQGLPGLNGLKGQQGRRGKTGPKGDPGIPGLDRSGFPGETGSPGIPGHQGEMGPLGQRGYPGNPGILGPPGEDGVIGMMGFPGAIGPPGPPGNPGTPGQRGSPGIPGVKGQRGTPGAKGEQGDKGNPGPSEISHVIGDKGEPGLKGFAGNPGEKGNRGVPGMPGLKGLKGLPGPAGPPGPRGDLGSTGNPGEPGLRGIPGSMGNMGMPGSKGKRGTLGFPGRAGRPGLPGIHGLQGDKGEPGYSEGTRPGPPGPTGDPGLPGDMGKKGEMGQPGPPGHLGPAGPEGAPGSPGSPGLPGKPGPHGDLGFKGIKGLLGPPGIRGPPGLPGFPGSPGPMGIRGDQGRDGIPGPAGEKGETGLLRAPPGPRGNPGAQGAKGDRGAPGFPGLPGRKGAMGDAGPRGPTGIEGFPGPPGLPGAIIPGQTGNRGPPGSRGSPGAPGPPGPPGSHVIGIKGDKGSMGHPGPKGPPGTAGDMGPPGRLGAPGTPGLPGPRGDPGFQGFPGVKGEKGNPGFLGSIGPPGPIGPKGPPGVRGDPGTLKIISLPGSPGPPGTPGEPGMQGEPGPPGPPGNLGPCGPRGKPGKDGKPGTPGPAGEKGNKGSKGEPGPAGSDGLPGLKGKRGDSGSPATWTTRGFVFTRHSQTTAIPSCPEGTVPLYSGFSFLFVQGNQRAHGQDLGTLGSCLQRFTTMPFLFCNVNDVCNFASRNDYSYWLSTPALMPMNMAPITGRALEPYISRCTVCEGPAIAIAVHSQTTDIPPCPHGWISLWKGFSFIMFTSAGSEGTGQALASPGSCLEEFRASPFLECHGRGTCNYYSNSYSFWLASLNPERMFRKPIPSTVKAGELEKIISRCQVCMKKRH</sequence>
<name>CO4A3_HUMAN</name>
<gene>
    <name type="primary">COL4A3</name>
</gene>
<comment type="function">
    <text>Type IV collagen is the major structural component of glomerular basement membranes (GBM), forming a 'chicken-wire' meshwork together with laminins, proteoglycans and entactin/nidogen.</text>
</comment>
<comment type="function">
    <text>Tumstatin, a cleavage fragment corresponding to the collagen alpha 3(IV) NC1 domain, possesses both anti-angiogenic and anti-tumor cell activity; these two anti-tumor properties may be regulated via RGD-independent ITGB3-mediated mechanisms.</text>
</comment>
<comment type="subunit">
    <text evidence="1 8 9">There are six type IV collagen isoforms, alpha 1(IV)-alpha 6(IV), each of which can form a triple helix structure with 2 other chains to generate type IV collagen network. The alpha 3(IV) chain forms a triple helical protomer with alpha 4(IV) and alpha 5(IV); this triple helical structure dimerizes through NC1-NC1 domain interactions such that the alpha 3(IV), alpha 4(IV) and alpha 5(IV) chains of one protomer connect with the alpha 5(IV), alpha 4(IV) and alpha 3(IV) chains of the opposite promoter, respectively (PubMed:12193605). Interacts with ITGB3 (PubMed:12682293). Associates with LAMB2 at the neuromuscular junction and in GBM (By similarity).</text>
</comment>
<comment type="subcellular location">
    <subcellularLocation>
        <location>Secreted</location>
        <location>Extracellular space</location>
        <location>Extracellular matrix</location>
        <location>Basement membrane</location>
    </subcellularLocation>
    <text evidence="1">Colocalizes with COL4A4 and COL4A5 in GBM, tubular basement membrane (TBM) and synaptic basal lamina (BL).</text>
</comment>
<comment type="alternative products">
    <event type="alternative splicing"/>
    <isoform>
        <id>Q01955-1</id>
        <name>1</name>
        <name>GP</name>
        <sequence type="displayed"/>
    </isoform>
    <isoform>
        <id>Q01955-2</id>
        <name>2</name>
        <name>V</name>
        <name>GP-V</name>
        <sequence type="described" ref="VSP_001170"/>
    </isoform>
    <isoform>
        <id>Q01955-3</id>
        <name>3</name>
        <name>L5</name>
        <name>GP-III</name>
        <name>GP-III/V</name>
        <sequence type="described" ref="VSP_001171"/>
    </isoform>
    <isoform>
        <id>Q01955-4</id>
        <name>4</name>
        <name>GP-III/IV/V</name>
        <sequence type="described" ref="VSP_023500"/>
    </isoform>
    <isoform>
        <id>Q01955-5</id>
        <name>5</name>
        <name>GP-II/III/IV/V</name>
        <sequence type="described" ref="VSP_023498 VSP_023499"/>
    </isoform>
    <text>The majority of isoforms differ in the C-terminal part of the NC1 domain.</text>
</comment>
<comment type="tissue specificity">
    <text evidence="13 16 17">Alpha 3 and alpha 4 type IV collagens are colocalized and present in kidney, eye, basement membranes of lens capsule, cochlea, lung, skeletal muscle, aorta, synaptic fibers, fetal kidney and fetal lung. PubMed:8083201 reports similar levels of expression of alpha 3 and alpha 4 type IV collagens in kidney, but PubMed:7523402 reports that in kidney levels of alpha 3 type IV collagen are significantly lower than those of alpha 4 type IV collagen. According to PubMed:8083201, alpha 3 type IV collagen is not detected in heart, brain, placenta, liver, pancreas, extrasynaptic muscle fibers, endoneurial and perineurial nerves, fetal brain, fetal heart and fetal liver. According to PubMed:7523402, alpha 3 type IV collagen is strongly expressed in pancreas, neuroretina and calvaria and not expressed in adrenal, ileum and skin. Isoform 1 and isoform 3 are strongly expressed in kidney, lung, suprarenal capsule, muscle and spleen, in each of these tissues isoform 1 is more abundant than isoform 3. Isoform 1 and isoform 3 are expressed at low levels in artery, fat, pericardium and peripherical nerve, but not in placenta, mesangium, skin, pleura and cultured umbilical endothelial cells.</text>
</comment>
<comment type="domain">
    <text>Alpha chains of type IV collagen have a non-collagenous domain (NC1) at their C-terminus, frequent interruptions of the G-X-Y repeats in the long central triple-helical domain (which may cause flexibility in the triple helix), and a short N-terminal triple-helical 7S domain.</text>
</comment>
<comment type="PTM">
    <text>Prolines at the third position of the tripeptide repeating unit (G-X-Y) are hydroxylated in some or all of the chains.</text>
</comment>
<comment type="PTM">
    <text>Isoform 2 contains an additional N-linked glycosylation site.</text>
</comment>
<comment type="PTM">
    <text>Type IV collagens contain numerous cysteine residues which are involved in inter- and intramolecular disulfide bonding. 12 of these, located in the NC1 domain, are conserved in all known type IV collagens.</text>
</comment>
<comment type="PTM">
    <text evidence="1">The trimeric structure of the NC1 domains is stabilized by covalent bonds between Lys and Met residues.</text>
</comment>
<comment type="PTM">
    <text evidence="5">Phosphorylated. Thought to be phosphorylated by CERT, but CERT does not have kinase activity.</text>
</comment>
<comment type="disease">
    <text>Autoantibodies against the NC1 domain of alpha 3(IV) are found in Goodpasture syndrome, an autoimmune disease of lung and kidney.</text>
</comment>
<comment type="disease" evidence="7">
    <disease id="DI-06644">
        <name>Hematuria, benign familial, 2</name>
        <acronym>BFH2</acronym>
        <description>An autosomal dominant condition characterized by non-progressive isolated microscopic hematuria that does not result in renal failure. It is characterized pathologically by thinning of the glomerular basement membrane.</description>
        <dbReference type="MIM" id="620320"/>
    </disease>
    <text>The disease is caused by variants affecting the gene represented in this entry.</text>
</comment>
<comment type="disease" evidence="6 10 11 12 15 18">
    <disease id="DI-02831">
        <name>Alport syndrome 3A, autosomal dominant</name>
        <acronym>ATS3A</acronym>
        <description>A form of Alport syndrome, a syndrome characterized by progressive glomerulonephritis, glomerular basement membrane defects, renal failure, sensorineural deafness and specific eye abnormalities (lenticonous and macular flecks). The disorder shows considerable heterogeneity in that families differ in the age of end-stage renal disease and the occurrence of deafness.</description>
        <dbReference type="MIM" id="104200"/>
    </disease>
    <text>The disease is caused by variants affecting the gene represented in this entry.</text>
</comment>
<comment type="disease" evidence="6 10 11 12 15 18">
    <disease id="DI-06774">
        <name>Alport syndrome 3B, autosomal recessive</name>
        <acronym>ATS3B</acronym>
        <description>A form of Alport syndrome, a syndrome characterized by progressive glomerulonephritis, glomerular basement membrane defects, renal failure, sensorineural deafness and specific eye abnormalities (lenticonous and macular flecks). The disorder shows considerable heterogeneity in that families differ in the age of end-stage renal disease and the occurrence of deafness.</description>
        <dbReference type="MIM" id="620536"/>
    </disease>
    <text>The disease is caused by variants affecting the gene represented in this entry.</text>
</comment>
<comment type="miscellaneous">
    <text>The epitopes recognized by the Goodpasture autoantibodies are sequestered within the NC1 hexamer of the type IV collagen network.</text>
</comment>
<comment type="similarity">
    <text evidence="3">Belongs to the type IV collagen family.</text>
</comment>
<evidence type="ECO:0000250" key="1"/>
<evidence type="ECO:0000255" key="2"/>
<evidence type="ECO:0000255" key="3">
    <source>
        <dbReference type="PROSITE-ProRule" id="PRU00736"/>
    </source>
</evidence>
<evidence type="ECO:0000256" key="4">
    <source>
        <dbReference type="SAM" id="MobiDB-lite"/>
    </source>
</evidence>
<evidence type="ECO:0000269" key="5">
    <source>
    </source>
</evidence>
<evidence type="ECO:0000269" key="6">
    <source>
    </source>
</evidence>
<evidence type="ECO:0000269" key="7">
    <source>
    </source>
</evidence>
<evidence type="ECO:0000269" key="8">
    <source>
    </source>
</evidence>
<evidence type="ECO:0000269" key="9">
    <source>
    </source>
</evidence>
<evidence type="ECO:0000269" key="10">
    <source>
    </source>
</evidence>
<evidence type="ECO:0000269" key="11">
    <source>
    </source>
</evidence>
<evidence type="ECO:0000269" key="12">
    <source>
    </source>
</evidence>
<evidence type="ECO:0000269" key="13">
    <source>
    </source>
</evidence>
<evidence type="ECO:0000269" key="14">
    <source>
    </source>
</evidence>
<evidence type="ECO:0000269" key="15">
    <source>
    </source>
</evidence>
<evidence type="ECO:0000269" key="16">
    <source>
    </source>
</evidence>
<evidence type="ECO:0000269" key="17">
    <source>
    </source>
</evidence>
<evidence type="ECO:0000269" key="18">
    <source>
    </source>
</evidence>
<evidence type="ECO:0000303" key="19">
    <source>
    </source>
</evidence>
<evidence type="ECO:0000303" key="20">
    <source>
    </source>
</evidence>
<evidence type="ECO:0000305" key="21"/>
<evidence type="ECO:0007829" key="22">
    <source>
        <dbReference type="PDB" id="5NB0"/>
    </source>
</evidence>
<evidence type="ECO:0007829" key="23">
    <source>
        <dbReference type="PDB" id="6WKU"/>
    </source>
</evidence>
<keyword id="KW-0002">3D-structure</keyword>
<keyword id="KW-0023">Alport syndrome</keyword>
<keyword id="KW-0025">Alternative splicing</keyword>
<keyword id="KW-0084">Basement membrane</keyword>
<keyword id="KW-0130">Cell adhesion</keyword>
<keyword id="KW-0176">Collagen</keyword>
<keyword id="KW-0209">Deafness</keyword>
<keyword id="KW-0903">Direct protein sequencing</keyword>
<keyword id="KW-0225">Disease variant</keyword>
<keyword id="KW-1015">Disulfide bond</keyword>
<keyword id="KW-0272">Extracellular matrix</keyword>
<keyword id="KW-0325">Glycoprotein</keyword>
<keyword id="KW-0379">Hydroxylation</keyword>
<keyword id="KW-0597">Phosphoprotein</keyword>
<keyword id="KW-1267">Proteomics identification</keyword>
<keyword id="KW-1185">Reference proteome</keyword>
<keyword id="KW-0677">Repeat</keyword>
<keyword id="KW-0964">Secreted</keyword>
<keyword id="KW-0732">Signal</keyword>
<proteinExistence type="evidence at protein level"/>